<keyword id="KW-0998">Cell outer membrane</keyword>
<keyword id="KW-0961">Cell wall biogenesis/degradation</keyword>
<keyword id="KW-0449">Lipoprotein</keyword>
<keyword id="KW-0456">Lyase</keyword>
<keyword id="KW-0472">Membrane</keyword>
<keyword id="KW-0564">Palmitate</keyword>
<keyword id="KW-0732">Signal</keyword>
<name>MLTC_YERPG</name>
<evidence type="ECO:0000255" key="1">
    <source>
        <dbReference type="HAMAP-Rule" id="MF_01616"/>
    </source>
</evidence>
<gene>
    <name evidence="1" type="primary">mltC</name>
    <name type="ordered locus">YpAngola_A0153</name>
</gene>
<sequence length="358" mass="39947">MKKILALLVIAPLLVSCSGNKNQVENEVFVKDTNGFEILMGQFAHNIENIWGLKEVLIAGPKDYVKYTDQYQTRSHINFDAGTITIETIATTNPAAHLRQAIITTLLMGDDPGSIDLYSDVNDIQISKEPFLYGQVLDNNGEPIRWEWRAAHFADYLLQNKMQTRTSGLHVISFVTIQLVPNHLDKRAHKYLPLVRKSAARYGVEESLILAIMQTESSFNPYAVSRSDALGLMQVVQHTAGKDVFKLKGKSGQPSRSYLFDPENNIDAGTAYLSILQNTYLGGIQNATSRRYAVITSYNGGAGSVLRVFHSDKNKAVGIINTMSPGDVFQTLTTKHPSGESRRYLVKVNSAQKNYRRY</sequence>
<accession>A9R6R2</accession>
<dbReference type="EC" id="4.2.2.n1" evidence="1"/>
<dbReference type="EMBL" id="CP000901">
    <property type="protein sequence ID" value="ABX86561.1"/>
    <property type="molecule type" value="Genomic_DNA"/>
</dbReference>
<dbReference type="RefSeq" id="WP_002209995.1">
    <property type="nucleotide sequence ID" value="NZ_CP009935.1"/>
</dbReference>
<dbReference type="SMR" id="A9R6R2"/>
<dbReference type="CAZy" id="GH23">
    <property type="family name" value="Glycoside Hydrolase Family 23"/>
</dbReference>
<dbReference type="GeneID" id="57973687"/>
<dbReference type="KEGG" id="ypg:YpAngola_A0153"/>
<dbReference type="PATRIC" id="fig|349746.12.peg.1094"/>
<dbReference type="GO" id="GO:0009279">
    <property type="term" value="C:cell outer membrane"/>
    <property type="evidence" value="ECO:0007669"/>
    <property type="project" value="UniProtKB-SubCell"/>
</dbReference>
<dbReference type="GO" id="GO:0016798">
    <property type="term" value="F:hydrolase activity, acting on glycosyl bonds"/>
    <property type="evidence" value="ECO:0007669"/>
    <property type="project" value="InterPro"/>
</dbReference>
<dbReference type="GO" id="GO:0008933">
    <property type="term" value="F:peptidoglycan lytic transglycosylase activity"/>
    <property type="evidence" value="ECO:0007669"/>
    <property type="project" value="UniProtKB-UniRule"/>
</dbReference>
<dbReference type="GO" id="GO:0016998">
    <property type="term" value="P:cell wall macromolecule catabolic process"/>
    <property type="evidence" value="ECO:0007669"/>
    <property type="project" value="UniProtKB-UniRule"/>
</dbReference>
<dbReference type="GO" id="GO:0071555">
    <property type="term" value="P:cell wall organization"/>
    <property type="evidence" value="ECO:0007669"/>
    <property type="project" value="UniProtKB-KW"/>
</dbReference>
<dbReference type="GO" id="GO:0000270">
    <property type="term" value="P:peptidoglycan metabolic process"/>
    <property type="evidence" value="ECO:0007669"/>
    <property type="project" value="InterPro"/>
</dbReference>
<dbReference type="CDD" id="cd16893">
    <property type="entry name" value="LT_MltC_MltE"/>
    <property type="match status" value="1"/>
</dbReference>
<dbReference type="FunFam" id="1.10.530.10:FF:000002">
    <property type="entry name" value="Membrane-bound lytic murein transglycosylase C"/>
    <property type="match status" value="1"/>
</dbReference>
<dbReference type="Gene3D" id="1.10.530.10">
    <property type="match status" value="1"/>
</dbReference>
<dbReference type="HAMAP" id="MF_01616">
    <property type="entry name" value="MltC"/>
    <property type="match status" value="1"/>
</dbReference>
<dbReference type="InterPro" id="IPR023346">
    <property type="entry name" value="Lysozyme-like_dom_sf"/>
</dbReference>
<dbReference type="InterPro" id="IPR023664">
    <property type="entry name" value="Murein_transglycosylaseC"/>
</dbReference>
<dbReference type="InterPro" id="IPR024570">
    <property type="entry name" value="Murein_transglycosylaseC_N"/>
</dbReference>
<dbReference type="InterPro" id="IPR000189">
    <property type="entry name" value="Transglyc_AS"/>
</dbReference>
<dbReference type="InterPro" id="IPR008258">
    <property type="entry name" value="Transglycosylase_SLT_dom_1"/>
</dbReference>
<dbReference type="NCBIfam" id="NF008670">
    <property type="entry name" value="PRK11671.1"/>
    <property type="match status" value="1"/>
</dbReference>
<dbReference type="PANTHER" id="PTHR37423:SF2">
    <property type="entry name" value="MEMBRANE-BOUND LYTIC MUREIN TRANSGLYCOSYLASE C"/>
    <property type="match status" value="1"/>
</dbReference>
<dbReference type="PANTHER" id="PTHR37423">
    <property type="entry name" value="SOLUBLE LYTIC MUREIN TRANSGLYCOSYLASE-RELATED"/>
    <property type="match status" value="1"/>
</dbReference>
<dbReference type="Pfam" id="PF11873">
    <property type="entry name" value="Mltc_N"/>
    <property type="match status" value="1"/>
</dbReference>
<dbReference type="Pfam" id="PF01464">
    <property type="entry name" value="SLT"/>
    <property type="match status" value="1"/>
</dbReference>
<dbReference type="SUPFAM" id="SSF53955">
    <property type="entry name" value="Lysozyme-like"/>
    <property type="match status" value="1"/>
</dbReference>
<dbReference type="PROSITE" id="PS51257">
    <property type="entry name" value="PROKAR_LIPOPROTEIN"/>
    <property type="match status" value="1"/>
</dbReference>
<dbReference type="PROSITE" id="PS00922">
    <property type="entry name" value="TRANSGLYCOSYLASE"/>
    <property type="match status" value="1"/>
</dbReference>
<proteinExistence type="inferred from homology"/>
<protein>
    <recommendedName>
        <fullName evidence="1">Membrane-bound lytic murein transglycosylase C</fullName>
        <ecNumber evidence="1">4.2.2.n1</ecNumber>
    </recommendedName>
    <alternativeName>
        <fullName evidence="1">Murein lyase C</fullName>
    </alternativeName>
</protein>
<organism>
    <name type="scientific">Yersinia pestis bv. Antiqua (strain Angola)</name>
    <dbReference type="NCBI Taxonomy" id="349746"/>
    <lineage>
        <taxon>Bacteria</taxon>
        <taxon>Pseudomonadati</taxon>
        <taxon>Pseudomonadota</taxon>
        <taxon>Gammaproteobacteria</taxon>
        <taxon>Enterobacterales</taxon>
        <taxon>Yersiniaceae</taxon>
        <taxon>Yersinia</taxon>
    </lineage>
</organism>
<reference key="1">
    <citation type="journal article" date="2010" name="J. Bacteriol.">
        <title>Genome sequence of the deep-rooted Yersinia pestis strain Angola reveals new insights into the evolution and pangenome of the plague bacterium.</title>
        <authorList>
            <person name="Eppinger M."/>
            <person name="Worsham P.L."/>
            <person name="Nikolich M.P."/>
            <person name="Riley D.R."/>
            <person name="Sebastian Y."/>
            <person name="Mou S."/>
            <person name="Achtman M."/>
            <person name="Lindler L.E."/>
            <person name="Ravel J."/>
        </authorList>
    </citation>
    <scope>NUCLEOTIDE SEQUENCE [LARGE SCALE GENOMIC DNA]</scope>
    <source>
        <strain>Angola</strain>
    </source>
</reference>
<comment type="function">
    <text evidence="1">Murein-degrading enzyme. May play a role in recycling of muropeptides during cell elongation and/or cell division.</text>
</comment>
<comment type="catalytic activity">
    <reaction evidence="1">
        <text>Exolytic cleavage of the (1-&gt;4)-beta-glycosidic linkage between N-acetylmuramic acid (MurNAc) and N-acetylglucosamine (GlcNAc) residues in peptidoglycan, from either the reducing or the non-reducing ends of the peptidoglycan chains, with concomitant formation of a 1,6-anhydrobond in the MurNAc residue.</text>
        <dbReference type="EC" id="4.2.2.n1"/>
    </reaction>
</comment>
<comment type="subcellular location">
    <subcellularLocation>
        <location evidence="1">Cell outer membrane</location>
        <topology evidence="1">Lipid-anchor</topology>
    </subcellularLocation>
</comment>
<comment type="similarity">
    <text evidence="1">Belongs to the transglycosylase Slt family.</text>
</comment>
<feature type="signal peptide" evidence="1">
    <location>
        <begin position="1"/>
        <end position="16"/>
    </location>
</feature>
<feature type="chain" id="PRO_1000185933" description="Membrane-bound lytic murein transglycosylase C">
    <location>
        <begin position="17"/>
        <end position="358"/>
    </location>
</feature>
<feature type="lipid moiety-binding region" description="N-palmitoyl cysteine" evidence="1">
    <location>
        <position position="17"/>
    </location>
</feature>
<feature type="lipid moiety-binding region" description="S-diacylglycerol cysteine" evidence="1">
    <location>
        <position position="17"/>
    </location>
</feature>